<keyword id="KW-0067">ATP-binding</keyword>
<keyword id="KW-0436">Ligase</keyword>
<keyword id="KW-0547">Nucleotide-binding</keyword>
<keyword id="KW-0648">Protein biosynthesis</keyword>
<keyword id="KW-1185">Reference proteome</keyword>
<sequence>MTDIIRSDAATLAAKIAIKEVSSAEITRACLDQIEATDETYHAFLHVAADEALAAAAAIDKQVAAGEPLPSALAGVPLALKDVFTTSDMPTTCGSKILEGWRSPYDATLTARLRAAGIPILGKTNMDEFAMGSSTENSAYGPTRNPWNLDRVPGGSGGGSAAALAAFQAPLAIGSDTGGSIRQPAALTATVGVKPTYGTVSRYGLVACASSLDQGGPCARTVLDTALLHQVIAGHDPRDSTSVDAEVPDVVGAARAGAVGDLRGVRVGVVRQLHGGEGYQPGVLASFEAAVEQLTALGAEVSEVDCPHFDHALAAYYLILPSEVSSNLARFDAMRYGLRVGDDGTRSAEEVMAMTRAAGFGPEVKRRIMIGTYALSAGYYDAYYNQAQKVRTLIARDLDAAYRSVDVLVSPTTPTTAFRLGEKVDDPLAMYLFDLCTLPLNLAGHCGMSVPSGLSPDDGLPVGLQIMAPALADDRLYRVGAAYEAARGPLLSAI</sequence>
<protein>
    <recommendedName>
        <fullName evidence="1">Glutamyl-tRNA(Gln) amidotransferase subunit A</fullName>
        <shortName evidence="1">Glu-ADT subunit A</shortName>
        <ecNumber evidence="1">6.3.5.7</ecNumber>
    </recommendedName>
</protein>
<comment type="function">
    <text evidence="1">Allows the formation of correctly charged Gln-tRNA(Gln) through the transamidation of misacylated Glu-tRNA(Gln) in organisms which lack glutaminyl-tRNA synthetase. The reaction takes place in the presence of glutamine and ATP through an activated gamma-phospho-Glu-tRNA(Gln).</text>
</comment>
<comment type="catalytic activity">
    <reaction evidence="1">
        <text>L-glutamyl-tRNA(Gln) + L-glutamine + ATP + H2O = L-glutaminyl-tRNA(Gln) + L-glutamate + ADP + phosphate + H(+)</text>
        <dbReference type="Rhea" id="RHEA:17521"/>
        <dbReference type="Rhea" id="RHEA-COMP:9681"/>
        <dbReference type="Rhea" id="RHEA-COMP:9684"/>
        <dbReference type="ChEBI" id="CHEBI:15377"/>
        <dbReference type="ChEBI" id="CHEBI:15378"/>
        <dbReference type="ChEBI" id="CHEBI:29985"/>
        <dbReference type="ChEBI" id="CHEBI:30616"/>
        <dbReference type="ChEBI" id="CHEBI:43474"/>
        <dbReference type="ChEBI" id="CHEBI:58359"/>
        <dbReference type="ChEBI" id="CHEBI:78520"/>
        <dbReference type="ChEBI" id="CHEBI:78521"/>
        <dbReference type="ChEBI" id="CHEBI:456216"/>
        <dbReference type="EC" id="6.3.5.7"/>
    </reaction>
</comment>
<comment type="subunit">
    <text evidence="1">Heterotrimer of A, B and C subunits.</text>
</comment>
<comment type="similarity">
    <text evidence="1">Belongs to the amidase family. GatA subfamily.</text>
</comment>
<name>GATA_MYCTA</name>
<feature type="chain" id="PRO_1000015867" description="Glutamyl-tRNA(Gln) amidotransferase subunit A">
    <location>
        <begin position="1"/>
        <end position="494"/>
    </location>
</feature>
<feature type="active site" description="Charge relay system" evidence="1">
    <location>
        <position position="81"/>
    </location>
</feature>
<feature type="active site" description="Charge relay system" evidence="1">
    <location>
        <position position="156"/>
    </location>
</feature>
<feature type="active site" description="Acyl-ester intermediate" evidence="1">
    <location>
        <position position="180"/>
    </location>
</feature>
<accession>A5U723</accession>
<organism>
    <name type="scientific">Mycobacterium tuberculosis (strain ATCC 25177 / H37Ra)</name>
    <dbReference type="NCBI Taxonomy" id="419947"/>
    <lineage>
        <taxon>Bacteria</taxon>
        <taxon>Bacillati</taxon>
        <taxon>Actinomycetota</taxon>
        <taxon>Actinomycetes</taxon>
        <taxon>Mycobacteriales</taxon>
        <taxon>Mycobacteriaceae</taxon>
        <taxon>Mycobacterium</taxon>
        <taxon>Mycobacterium tuberculosis complex</taxon>
    </lineage>
</organism>
<proteinExistence type="inferred from homology"/>
<reference key="1">
    <citation type="journal article" date="2008" name="PLoS ONE">
        <title>Genetic basis of virulence attenuation revealed by comparative genomic analysis of Mycobacterium tuberculosis strain H37Ra versus H37Rv.</title>
        <authorList>
            <person name="Zheng H."/>
            <person name="Lu L."/>
            <person name="Wang B."/>
            <person name="Pu S."/>
            <person name="Zhang X."/>
            <person name="Zhu G."/>
            <person name="Shi W."/>
            <person name="Zhang L."/>
            <person name="Wang H."/>
            <person name="Wang S."/>
            <person name="Zhao G."/>
            <person name="Zhang Y."/>
        </authorList>
    </citation>
    <scope>NUCLEOTIDE SEQUENCE [LARGE SCALE GENOMIC DNA]</scope>
    <source>
        <strain>ATCC 25177 / H37Ra</strain>
    </source>
</reference>
<evidence type="ECO:0000255" key="1">
    <source>
        <dbReference type="HAMAP-Rule" id="MF_00120"/>
    </source>
</evidence>
<gene>
    <name evidence="1" type="primary">gatA</name>
    <name type="ordered locus">MRA_3041</name>
</gene>
<dbReference type="EC" id="6.3.5.7" evidence="1"/>
<dbReference type="EMBL" id="CP000611">
    <property type="protein sequence ID" value="ABQ74823.1"/>
    <property type="molecule type" value="Genomic_DNA"/>
</dbReference>
<dbReference type="RefSeq" id="WP_003900613.1">
    <property type="nucleotide sequence ID" value="NZ_CP016972.1"/>
</dbReference>
<dbReference type="SMR" id="A5U723"/>
<dbReference type="KEGG" id="mra:MRA_3041"/>
<dbReference type="eggNOG" id="COG0154">
    <property type="taxonomic scope" value="Bacteria"/>
</dbReference>
<dbReference type="HOGENOM" id="CLU_009600_0_3_11"/>
<dbReference type="Proteomes" id="UP000001988">
    <property type="component" value="Chromosome"/>
</dbReference>
<dbReference type="GO" id="GO:0030956">
    <property type="term" value="C:glutamyl-tRNA(Gln) amidotransferase complex"/>
    <property type="evidence" value="ECO:0007669"/>
    <property type="project" value="InterPro"/>
</dbReference>
<dbReference type="GO" id="GO:0005524">
    <property type="term" value="F:ATP binding"/>
    <property type="evidence" value="ECO:0007669"/>
    <property type="project" value="UniProtKB-KW"/>
</dbReference>
<dbReference type="GO" id="GO:0050567">
    <property type="term" value="F:glutaminyl-tRNA synthase (glutamine-hydrolyzing) activity"/>
    <property type="evidence" value="ECO:0007669"/>
    <property type="project" value="UniProtKB-UniRule"/>
</dbReference>
<dbReference type="GO" id="GO:0006412">
    <property type="term" value="P:translation"/>
    <property type="evidence" value="ECO:0007669"/>
    <property type="project" value="UniProtKB-UniRule"/>
</dbReference>
<dbReference type="Gene3D" id="3.90.1300.10">
    <property type="entry name" value="Amidase signature (AS) domain"/>
    <property type="match status" value="1"/>
</dbReference>
<dbReference type="HAMAP" id="MF_00120">
    <property type="entry name" value="GatA"/>
    <property type="match status" value="1"/>
</dbReference>
<dbReference type="InterPro" id="IPR000120">
    <property type="entry name" value="Amidase"/>
</dbReference>
<dbReference type="InterPro" id="IPR020556">
    <property type="entry name" value="Amidase_CS"/>
</dbReference>
<dbReference type="InterPro" id="IPR023631">
    <property type="entry name" value="Amidase_dom"/>
</dbReference>
<dbReference type="InterPro" id="IPR036928">
    <property type="entry name" value="AS_sf"/>
</dbReference>
<dbReference type="InterPro" id="IPR004412">
    <property type="entry name" value="GatA"/>
</dbReference>
<dbReference type="NCBIfam" id="TIGR00132">
    <property type="entry name" value="gatA"/>
    <property type="match status" value="1"/>
</dbReference>
<dbReference type="PANTHER" id="PTHR11895:SF151">
    <property type="entry name" value="GLUTAMYL-TRNA(GLN) AMIDOTRANSFERASE SUBUNIT A"/>
    <property type="match status" value="1"/>
</dbReference>
<dbReference type="PANTHER" id="PTHR11895">
    <property type="entry name" value="TRANSAMIDASE"/>
    <property type="match status" value="1"/>
</dbReference>
<dbReference type="Pfam" id="PF01425">
    <property type="entry name" value="Amidase"/>
    <property type="match status" value="1"/>
</dbReference>
<dbReference type="SUPFAM" id="SSF75304">
    <property type="entry name" value="Amidase signature (AS) enzymes"/>
    <property type="match status" value="1"/>
</dbReference>
<dbReference type="PROSITE" id="PS00571">
    <property type="entry name" value="AMIDASES"/>
    <property type="match status" value="1"/>
</dbReference>